<organism>
    <name type="scientific">Saccharum officinarum</name>
    <name type="common">Sugarcane</name>
    <dbReference type="NCBI Taxonomy" id="4547"/>
    <lineage>
        <taxon>Eukaryota</taxon>
        <taxon>Viridiplantae</taxon>
        <taxon>Streptophyta</taxon>
        <taxon>Embryophyta</taxon>
        <taxon>Tracheophyta</taxon>
        <taxon>Spermatophyta</taxon>
        <taxon>Magnoliopsida</taxon>
        <taxon>Liliopsida</taxon>
        <taxon>Poales</taxon>
        <taxon>Poaceae</taxon>
        <taxon>PACMAD clade</taxon>
        <taxon>Panicoideae</taxon>
        <taxon>Andropogonodae</taxon>
        <taxon>Andropogoneae</taxon>
        <taxon>Saccharinae</taxon>
        <taxon>Saccharum</taxon>
        <taxon>Saccharum officinarum species complex</taxon>
    </lineage>
</organism>
<reference key="1">
    <citation type="journal article" date="2004" name="DNA Res.">
        <title>Complete nucleotide sequence of the sugarcane (Saccharum officinarum) chloroplast genome: a comparative analysis of four monocot chloroplast genomes.</title>
        <authorList>
            <person name="Asano T."/>
            <person name="Tsudzuki T."/>
            <person name="Takahashi S."/>
            <person name="Shimada H."/>
            <person name="Kadowaki K."/>
        </authorList>
    </citation>
    <scope>NUCLEOTIDE SEQUENCE [LARGE SCALE GENOMIC DNA]</scope>
</reference>
<keyword id="KW-0150">Chloroplast</keyword>
<keyword id="KW-0934">Plastid</keyword>
<geneLocation type="chloroplast"/>
<evidence type="ECO:0000305" key="1"/>
<feature type="chain" id="PRO_0000277367" description="Uncharacterized protein ycf76">
    <location>
        <begin position="1"/>
        <end position="85"/>
    </location>
</feature>
<comment type="subcellular location">
    <subcellularLocation>
        <location>Plastid</location>
        <location>Chloroplast</location>
    </subcellularLocation>
</comment>
<comment type="similarity">
    <text evidence="1">Belongs to the ycf76 family.</text>
</comment>
<name>YCF76_SACOF</name>
<dbReference type="EMBL" id="AP006714">
    <property type="protein sequence ID" value="BAD27350.1"/>
    <property type="molecule type" value="Genomic_DNA"/>
</dbReference>
<dbReference type="EMBL" id="AP006714">
    <property type="protein sequence ID" value="BAD27371.1"/>
    <property type="molecule type" value="Genomic_DNA"/>
</dbReference>
<dbReference type="GO" id="GO:0009507">
    <property type="term" value="C:chloroplast"/>
    <property type="evidence" value="ECO:0007669"/>
    <property type="project" value="UniProtKB-SubCell"/>
</dbReference>
<protein>
    <recommendedName>
        <fullName>Uncharacterized protein ycf76</fullName>
    </recommendedName>
</protein>
<proteinExistence type="inferred from homology"/>
<sequence length="85" mass="9783">MKKILFSMFYSILVGEEPDSVFLKKEGKQNQVKMIWIAPSSCAKDLTISEGTGATFLFNFHSRVSICFHALFLRPRNMKWTNSFS</sequence>
<accession>Q6ENQ6</accession>
<gene>
    <name type="primary">ycf76-A</name>
</gene>
<gene>
    <name type="primary">ycf76-B</name>
</gene>